<comment type="function">
    <text evidence="1">Catalyzes the cyclization of GTP to (8S)-3',8-cyclo-7,8-dihydroguanosine 5'-triphosphate.</text>
</comment>
<comment type="catalytic activity">
    <reaction evidence="1">
        <text>GTP + AH2 + S-adenosyl-L-methionine = (8S)-3',8-cyclo-7,8-dihydroguanosine 5'-triphosphate + 5'-deoxyadenosine + L-methionine + A + H(+)</text>
        <dbReference type="Rhea" id="RHEA:49576"/>
        <dbReference type="ChEBI" id="CHEBI:13193"/>
        <dbReference type="ChEBI" id="CHEBI:15378"/>
        <dbReference type="ChEBI" id="CHEBI:17319"/>
        <dbReference type="ChEBI" id="CHEBI:17499"/>
        <dbReference type="ChEBI" id="CHEBI:37565"/>
        <dbReference type="ChEBI" id="CHEBI:57844"/>
        <dbReference type="ChEBI" id="CHEBI:59789"/>
        <dbReference type="ChEBI" id="CHEBI:131766"/>
        <dbReference type="EC" id="4.1.99.22"/>
    </reaction>
</comment>
<comment type="cofactor">
    <cofactor evidence="1">
        <name>[4Fe-4S] cluster</name>
        <dbReference type="ChEBI" id="CHEBI:49883"/>
    </cofactor>
    <text evidence="1">Binds 2 [4Fe-4S] clusters. Binds 1 [4Fe-4S] cluster coordinated with 3 cysteines and an exchangeable S-adenosyl-L-methionine and 1 [4Fe-4S] cluster coordinated with 3 cysteines and the GTP-derived substrate.</text>
</comment>
<comment type="pathway">
    <text evidence="1">Cofactor biosynthesis; molybdopterin biosynthesis.</text>
</comment>
<comment type="similarity">
    <text evidence="1">Belongs to the radical SAM superfamily. MoaA family.</text>
</comment>
<comment type="sequence caution" evidence="3">
    <conflict type="erroneous initiation">
        <sequence resource="EMBL-CDS" id="BAA29183"/>
    </conflict>
</comment>
<dbReference type="EC" id="4.1.99.22" evidence="1"/>
<dbReference type="EMBL" id="BA000001">
    <property type="protein sequence ID" value="BAA29183.1"/>
    <property type="status" value="ALT_INIT"/>
    <property type="molecule type" value="Genomic_DNA"/>
</dbReference>
<dbReference type="PIR" id="H71231">
    <property type="entry name" value="H71231"/>
</dbReference>
<dbReference type="RefSeq" id="WP_048053033.1">
    <property type="nucleotide sequence ID" value="NC_000961.1"/>
</dbReference>
<dbReference type="SMR" id="O57854"/>
<dbReference type="STRING" id="70601.gene:9377022"/>
<dbReference type="EnsemblBacteria" id="BAA29183">
    <property type="protein sequence ID" value="BAA29183"/>
    <property type="gene ID" value="BAA29183"/>
</dbReference>
<dbReference type="GeneID" id="1444012"/>
<dbReference type="KEGG" id="pho:PH0114"/>
<dbReference type="eggNOG" id="arCOG00930">
    <property type="taxonomic scope" value="Archaea"/>
</dbReference>
<dbReference type="OrthoDB" id="6925at2157"/>
<dbReference type="UniPathway" id="UPA00344"/>
<dbReference type="Proteomes" id="UP000000752">
    <property type="component" value="Chromosome"/>
</dbReference>
<dbReference type="GO" id="GO:0051539">
    <property type="term" value="F:4 iron, 4 sulfur cluster binding"/>
    <property type="evidence" value="ECO:0007669"/>
    <property type="project" value="UniProtKB-UniRule"/>
</dbReference>
<dbReference type="GO" id="GO:0061799">
    <property type="term" value="F:cyclic pyranopterin monophosphate synthase activity"/>
    <property type="evidence" value="ECO:0007669"/>
    <property type="project" value="TreeGrafter"/>
</dbReference>
<dbReference type="GO" id="GO:0061798">
    <property type="term" value="F:GTP 3',8'-cyclase activity"/>
    <property type="evidence" value="ECO:0007669"/>
    <property type="project" value="UniProtKB-UniRule"/>
</dbReference>
<dbReference type="GO" id="GO:0005525">
    <property type="term" value="F:GTP binding"/>
    <property type="evidence" value="ECO:0007669"/>
    <property type="project" value="UniProtKB-UniRule"/>
</dbReference>
<dbReference type="GO" id="GO:0046872">
    <property type="term" value="F:metal ion binding"/>
    <property type="evidence" value="ECO:0007669"/>
    <property type="project" value="UniProtKB-KW"/>
</dbReference>
<dbReference type="GO" id="GO:1904047">
    <property type="term" value="F:S-adenosyl-L-methionine binding"/>
    <property type="evidence" value="ECO:0007669"/>
    <property type="project" value="UniProtKB-UniRule"/>
</dbReference>
<dbReference type="GO" id="GO:0006777">
    <property type="term" value="P:Mo-molybdopterin cofactor biosynthetic process"/>
    <property type="evidence" value="ECO:0007669"/>
    <property type="project" value="UniProtKB-UniRule"/>
</dbReference>
<dbReference type="CDD" id="cd01335">
    <property type="entry name" value="Radical_SAM"/>
    <property type="match status" value="1"/>
</dbReference>
<dbReference type="CDD" id="cd21117">
    <property type="entry name" value="Twitch_MoaA"/>
    <property type="match status" value="1"/>
</dbReference>
<dbReference type="Gene3D" id="3.20.20.70">
    <property type="entry name" value="Aldolase class I"/>
    <property type="match status" value="1"/>
</dbReference>
<dbReference type="HAMAP" id="MF_01225_A">
    <property type="entry name" value="MoaA_A"/>
    <property type="match status" value="1"/>
</dbReference>
<dbReference type="InterPro" id="IPR013785">
    <property type="entry name" value="Aldolase_TIM"/>
</dbReference>
<dbReference type="InterPro" id="IPR006638">
    <property type="entry name" value="Elp3/MiaA/NifB-like_rSAM"/>
</dbReference>
<dbReference type="InterPro" id="IPR013485">
    <property type="entry name" value="MoaA_arc"/>
</dbReference>
<dbReference type="InterPro" id="IPR000385">
    <property type="entry name" value="MoaA_NifB_PqqE_Fe-S-bd_CS"/>
</dbReference>
<dbReference type="InterPro" id="IPR010505">
    <property type="entry name" value="MoaA_twitch"/>
</dbReference>
<dbReference type="InterPro" id="IPR050105">
    <property type="entry name" value="MoCo_biosynth_MoaA/MoaC"/>
</dbReference>
<dbReference type="InterPro" id="IPR007197">
    <property type="entry name" value="rSAM"/>
</dbReference>
<dbReference type="NCBIfam" id="TIGR02668">
    <property type="entry name" value="moaA_archaeal"/>
    <property type="match status" value="1"/>
</dbReference>
<dbReference type="NCBIfam" id="NF001199">
    <property type="entry name" value="PRK00164.2-1"/>
    <property type="match status" value="1"/>
</dbReference>
<dbReference type="PANTHER" id="PTHR22960:SF0">
    <property type="entry name" value="MOLYBDENUM COFACTOR BIOSYNTHESIS PROTEIN 1"/>
    <property type="match status" value="1"/>
</dbReference>
<dbReference type="PANTHER" id="PTHR22960">
    <property type="entry name" value="MOLYBDOPTERIN COFACTOR SYNTHESIS PROTEIN A"/>
    <property type="match status" value="1"/>
</dbReference>
<dbReference type="Pfam" id="PF13353">
    <property type="entry name" value="Fer4_12"/>
    <property type="match status" value="1"/>
</dbReference>
<dbReference type="Pfam" id="PF06463">
    <property type="entry name" value="Mob_synth_C"/>
    <property type="match status" value="1"/>
</dbReference>
<dbReference type="Pfam" id="PF04055">
    <property type="entry name" value="Radical_SAM"/>
    <property type="match status" value="1"/>
</dbReference>
<dbReference type="SFLD" id="SFLDG01383">
    <property type="entry name" value="cyclic_pyranopterin_phosphate"/>
    <property type="match status" value="1"/>
</dbReference>
<dbReference type="SFLD" id="SFLDG01216">
    <property type="entry name" value="thioether_bond_formation_requi"/>
    <property type="match status" value="1"/>
</dbReference>
<dbReference type="SMART" id="SM00729">
    <property type="entry name" value="Elp3"/>
    <property type="match status" value="1"/>
</dbReference>
<dbReference type="SUPFAM" id="SSF102114">
    <property type="entry name" value="Radical SAM enzymes"/>
    <property type="match status" value="1"/>
</dbReference>
<dbReference type="PROSITE" id="PS01305">
    <property type="entry name" value="MOAA_NIFB_PQQE"/>
    <property type="match status" value="1"/>
</dbReference>
<dbReference type="PROSITE" id="PS51918">
    <property type="entry name" value="RADICAL_SAM"/>
    <property type="match status" value="1"/>
</dbReference>
<keyword id="KW-0004">4Fe-4S</keyword>
<keyword id="KW-0342">GTP-binding</keyword>
<keyword id="KW-0408">Iron</keyword>
<keyword id="KW-0411">Iron-sulfur</keyword>
<keyword id="KW-0456">Lyase</keyword>
<keyword id="KW-0479">Metal-binding</keyword>
<keyword id="KW-0501">Molybdenum cofactor biosynthesis</keyword>
<keyword id="KW-0547">Nucleotide-binding</keyword>
<keyword id="KW-0949">S-adenosyl-L-methionine</keyword>
<accession>O57854</accession>
<name>MOAA_PYRHO</name>
<sequence>MLIDRFGRPVTNLRISLTKECNLSCFYCHREGQLDGERFMTPEEIERIVRVASRLGIKKVKLTGGEPTIRKDILEIIRRLKPYVVDLSLTTNGTTMYVLAEKLKEAGLDRVNISLDTLDRKKYKMITGFNVLDEVIKGIKKATKLFYPVKLNMVVMKGVNDDEIWDMMRFAGEVNAILQLIELEVPREMENSQFFKDFFYPLKPLEEKFEKLAVKVKERRMHRRRKYFIPIDGKIVEVEVVRSMHNTVFCMNCTRLRLTADGYLKTCLLRRDDLIDILGPLRNGASDADLIEIFKRAVLLRRPYWTSNSS</sequence>
<proteinExistence type="inferred from homology"/>
<organism>
    <name type="scientific">Pyrococcus horikoshii (strain ATCC 700860 / DSM 12428 / JCM 9974 / NBRC 100139 / OT-3)</name>
    <dbReference type="NCBI Taxonomy" id="70601"/>
    <lineage>
        <taxon>Archaea</taxon>
        <taxon>Methanobacteriati</taxon>
        <taxon>Methanobacteriota</taxon>
        <taxon>Thermococci</taxon>
        <taxon>Thermococcales</taxon>
        <taxon>Thermococcaceae</taxon>
        <taxon>Pyrococcus</taxon>
    </lineage>
</organism>
<evidence type="ECO:0000255" key="1">
    <source>
        <dbReference type="HAMAP-Rule" id="MF_01225"/>
    </source>
</evidence>
<evidence type="ECO:0000255" key="2">
    <source>
        <dbReference type="PROSITE-ProRule" id="PRU01266"/>
    </source>
</evidence>
<evidence type="ECO:0000305" key="3"/>
<reference key="1">
    <citation type="journal article" date="1998" name="DNA Res.">
        <title>Complete sequence and gene organization of the genome of a hyper-thermophilic archaebacterium, Pyrococcus horikoshii OT3.</title>
        <authorList>
            <person name="Kawarabayasi Y."/>
            <person name="Sawada M."/>
            <person name="Horikawa H."/>
            <person name="Haikawa Y."/>
            <person name="Hino Y."/>
            <person name="Yamamoto S."/>
            <person name="Sekine M."/>
            <person name="Baba S."/>
            <person name="Kosugi H."/>
            <person name="Hosoyama A."/>
            <person name="Nagai Y."/>
            <person name="Sakai M."/>
            <person name="Ogura K."/>
            <person name="Otsuka R."/>
            <person name="Nakazawa H."/>
            <person name="Takamiya M."/>
            <person name="Ohfuku Y."/>
            <person name="Funahashi T."/>
            <person name="Tanaka T."/>
            <person name="Kudoh Y."/>
            <person name="Yamazaki J."/>
            <person name="Kushida N."/>
            <person name="Oguchi A."/>
            <person name="Aoki K."/>
            <person name="Yoshizawa T."/>
            <person name="Nakamura Y."/>
            <person name="Robb F.T."/>
            <person name="Horikoshi K."/>
            <person name="Masuchi Y."/>
            <person name="Shizuya H."/>
            <person name="Kikuchi H."/>
        </authorList>
    </citation>
    <scope>NUCLEOTIDE SEQUENCE [LARGE SCALE GENOMIC DNA]</scope>
    <source>
        <strain>ATCC 700860 / DSM 12428 / JCM 9974 / NBRC 100139 / OT-3</strain>
    </source>
</reference>
<gene>
    <name evidence="1" type="primary">moaA</name>
    <name type="ordered locus">PH0114</name>
</gene>
<feature type="chain" id="PRO_0000153025" description="Probable GTP 3',8-cyclase">
    <location>
        <begin position="1"/>
        <end position="310"/>
    </location>
</feature>
<feature type="domain" description="Radical SAM core" evidence="2">
    <location>
        <begin position="5"/>
        <end position="232"/>
    </location>
</feature>
<feature type="binding site" evidence="1">
    <location>
        <position position="14"/>
    </location>
    <ligand>
        <name>GTP</name>
        <dbReference type="ChEBI" id="CHEBI:37565"/>
    </ligand>
</feature>
<feature type="binding site" evidence="1">
    <location>
        <position position="21"/>
    </location>
    <ligand>
        <name>[4Fe-4S] cluster</name>
        <dbReference type="ChEBI" id="CHEBI:49883"/>
        <label>1</label>
        <note>4Fe-4S-S-AdoMet</note>
    </ligand>
</feature>
<feature type="binding site" evidence="1">
    <location>
        <position position="25"/>
    </location>
    <ligand>
        <name>[4Fe-4S] cluster</name>
        <dbReference type="ChEBI" id="CHEBI:49883"/>
        <label>1</label>
        <note>4Fe-4S-S-AdoMet</note>
    </ligand>
</feature>
<feature type="binding site" evidence="1">
    <location>
        <position position="27"/>
    </location>
    <ligand>
        <name>S-adenosyl-L-methionine</name>
        <dbReference type="ChEBI" id="CHEBI:59789"/>
    </ligand>
</feature>
<feature type="binding site" evidence="1">
    <location>
        <position position="28"/>
    </location>
    <ligand>
        <name>[4Fe-4S] cluster</name>
        <dbReference type="ChEBI" id="CHEBI:49883"/>
        <label>1</label>
        <note>4Fe-4S-S-AdoMet</note>
    </ligand>
</feature>
<feature type="binding site" evidence="1">
    <location>
        <position position="61"/>
    </location>
    <ligand>
        <name>GTP</name>
        <dbReference type="ChEBI" id="CHEBI:37565"/>
    </ligand>
</feature>
<feature type="binding site" evidence="1">
    <location>
        <position position="65"/>
    </location>
    <ligand>
        <name>S-adenosyl-L-methionine</name>
        <dbReference type="ChEBI" id="CHEBI:59789"/>
    </ligand>
</feature>
<feature type="binding site" evidence="1">
    <location>
        <position position="90"/>
    </location>
    <ligand>
        <name>GTP</name>
        <dbReference type="ChEBI" id="CHEBI:37565"/>
    </ligand>
</feature>
<feature type="binding site" evidence="1">
    <location>
        <position position="114"/>
    </location>
    <ligand>
        <name>S-adenosyl-L-methionine</name>
        <dbReference type="ChEBI" id="CHEBI:59789"/>
    </ligand>
</feature>
<feature type="binding site" evidence="1">
    <location>
        <position position="150"/>
    </location>
    <ligand>
        <name>GTP</name>
        <dbReference type="ChEBI" id="CHEBI:37565"/>
    </ligand>
</feature>
<feature type="binding site" evidence="1">
    <location>
        <position position="189"/>
    </location>
    <ligand>
        <name>S-adenosyl-L-methionine</name>
        <dbReference type="ChEBI" id="CHEBI:59789"/>
    </ligand>
</feature>
<feature type="binding site" evidence="1">
    <location>
        <position position="250"/>
    </location>
    <ligand>
        <name>[4Fe-4S] cluster</name>
        <dbReference type="ChEBI" id="CHEBI:49883"/>
        <label>2</label>
        <note>4Fe-4S-substrate</note>
    </ligand>
</feature>
<feature type="binding site" evidence="1">
    <location>
        <position position="253"/>
    </location>
    <ligand>
        <name>[4Fe-4S] cluster</name>
        <dbReference type="ChEBI" id="CHEBI:49883"/>
        <label>2</label>
        <note>4Fe-4S-substrate</note>
    </ligand>
</feature>
<feature type="binding site" evidence="1">
    <location>
        <begin position="255"/>
        <end position="257"/>
    </location>
    <ligand>
        <name>GTP</name>
        <dbReference type="ChEBI" id="CHEBI:37565"/>
    </ligand>
</feature>
<feature type="binding site" evidence="1">
    <location>
        <position position="267"/>
    </location>
    <ligand>
        <name>[4Fe-4S] cluster</name>
        <dbReference type="ChEBI" id="CHEBI:49883"/>
        <label>2</label>
        <note>4Fe-4S-substrate</note>
    </ligand>
</feature>
<protein>
    <recommendedName>
        <fullName evidence="1">Probable GTP 3',8-cyclase</fullName>
        <ecNumber evidence="1">4.1.99.22</ecNumber>
    </recommendedName>
    <alternativeName>
        <fullName evidence="1">Molybdenum cofactor biosynthesis protein A</fullName>
    </alternativeName>
</protein>